<keyword id="KW-0479">Metal-binding</keyword>
<keyword id="KW-0687">Ribonucleoprotein</keyword>
<keyword id="KW-0689">Ribosomal protein</keyword>
<keyword id="KW-0694">RNA-binding</keyword>
<keyword id="KW-0699">rRNA-binding</keyword>
<keyword id="KW-0862">Zinc</keyword>
<proteinExistence type="inferred from homology"/>
<protein>
    <recommendedName>
        <fullName evidence="1">Small ribosomal subunit protein uS14</fullName>
    </recommendedName>
    <alternativeName>
        <fullName evidence="2">30S ribosomal protein S14 type Z</fullName>
    </alternativeName>
</protein>
<accession>B5YDV6</accession>
<reference key="1">
    <citation type="journal article" date="2014" name="Genome Announc.">
        <title>Complete Genome Sequence of the Extreme Thermophile Dictyoglomus thermophilum H-6-12.</title>
        <authorList>
            <person name="Coil D.A."/>
            <person name="Badger J.H."/>
            <person name="Forberger H.C."/>
            <person name="Riggs F."/>
            <person name="Madupu R."/>
            <person name="Fedorova N."/>
            <person name="Ward N."/>
            <person name="Robb F.T."/>
            <person name="Eisen J.A."/>
        </authorList>
    </citation>
    <scope>NUCLEOTIDE SEQUENCE [LARGE SCALE GENOMIC DNA]</scope>
    <source>
        <strain>ATCC 35947 / DSM 3960 / H-6-12</strain>
    </source>
</reference>
<sequence length="61" mass="7315">MAKKSQIVKWLKPKKYKVREYNRCRICGRPRGYIRKFGLCRLCFRELALKGELPGVRKASW</sequence>
<evidence type="ECO:0000255" key="1">
    <source>
        <dbReference type="HAMAP-Rule" id="MF_01364"/>
    </source>
</evidence>
<evidence type="ECO:0000305" key="2"/>
<comment type="function">
    <text evidence="1">Binds 16S rRNA, required for the assembly of 30S particles and may also be responsible for determining the conformation of the 16S rRNA at the A site.</text>
</comment>
<comment type="cofactor">
    <cofactor evidence="1">
        <name>Zn(2+)</name>
        <dbReference type="ChEBI" id="CHEBI:29105"/>
    </cofactor>
    <text evidence="1">Binds 1 zinc ion per subunit.</text>
</comment>
<comment type="subunit">
    <text evidence="1">Part of the 30S ribosomal subunit. Contacts proteins S3 and S10.</text>
</comment>
<comment type="similarity">
    <text evidence="1">Belongs to the universal ribosomal protein uS14 family. Zinc-binding uS14 subfamily.</text>
</comment>
<gene>
    <name evidence="1" type="primary">rpsZ</name>
    <name evidence="1" type="synonym">rpsN</name>
    <name type="ordered locus">DICTH_0850</name>
</gene>
<feature type="chain" id="PRO_1000143899" description="Small ribosomal subunit protein uS14">
    <location>
        <begin position="1"/>
        <end position="61"/>
    </location>
</feature>
<feature type="binding site" evidence="1">
    <location>
        <position position="24"/>
    </location>
    <ligand>
        <name>Zn(2+)</name>
        <dbReference type="ChEBI" id="CHEBI:29105"/>
    </ligand>
</feature>
<feature type="binding site" evidence="1">
    <location>
        <position position="27"/>
    </location>
    <ligand>
        <name>Zn(2+)</name>
        <dbReference type="ChEBI" id="CHEBI:29105"/>
    </ligand>
</feature>
<feature type="binding site" evidence="1">
    <location>
        <position position="40"/>
    </location>
    <ligand>
        <name>Zn(2+)</name>
        <dbReference type="ChEBI" id="CHEBI:29105"/>
    </ligand>
</feature>
<feature type="binding site" evidence="1">
    <location>
        <position position="43"/>
    </location>
    <ligand>
        <name>Zn(2+)</name>
        <dbReference type="ChEBI" id="CHEBI:29105"/>
    </ligand>
</feature>
<dbReference type="EMBL" id="CP001146">
    <property type="protein sequence ID" value="ACI19901.1"/>
    <property type="molecule type" value="Genomic_DNA"/>
</dbReference>
<dbReference type="RefSeq" id="WP_012548533.1">
    <property type="nucleotide sequence ID" value="NC_011297.1"/>
</dbReference>
<dbReference type="SMR" id="B5YDV6"/>
<dbReference type="STRING" id="309799.DICTH_0850"/>
<dbReference type="PaxDb" id="309799-DICTH_0850"/>
<dbReference type="KEGG" id="dth:DICTH_0850"/>
<dbReference type="eggNOG" id="COG0199">
    <property type="taxonomic scope" value="Bacteria"/>
</dbReference>
<dbReference type="HOGENOM" id="CLU_139869_3_0_0"/>
<dbReference type="OrthoDB" id="9810484at2"/>
<dbReference type="Proteomes" id="UP000001733">
    <property type="component" value="Chromosome"/>
</dbReference>
<dbReference type="GO" id="GO:0005737">
    <property type="term" value="C:cytoplasm"/>
    <property type="evidence" value="ECO:0007669"/>
    <property type="project" value="UniProtKB-ARBA"/>
</dbReference>
<dbReference type="GO" id="GO:0015935">
    <property type="term" value="C:small ribosomal subunit"/>
    <property type="evidence" value="ECO:0007669"/>
    <property type="project" value="TreeGrafter"/>
</dbReference>
<dbReference type="GO" id="GO:0019843">
    <property type="term" value="F:rRNA binding"/>
    <property type="evidence" value="ECO:0007669"/>
    <property type="project" value="UniProtKB-UniRule"/>
</dbReference>
<dbReference type="GO" id="GO:0003735">
    <property type="term" value="F:structural constituent of ribosome"/>
    <property type="evidence" value="ECO:0007669"/>
    <property type="project" value="InterPro"/>
</dbReference>
<dbReference type="GO" id="GO:0008270">
    <property type="term" value="F:zinc ion binding"/>
    <property type="evidence" value="ECO:0007669"/>
    <property type="project" value="UniProtKB-UniRule"/>
</dbReference>
<dbReference type="GO" id="GO:0006412">
    <property type="term" value="P:translation"/>
    <property type="evidence" value="ECO:0007669"/>
    <property type="project" value="UniProtKB-UniRule"/>
</dbReference>
<dbReference type="FunFam" id="4.10.830.10:FF:000001">
    <property type="entry name" value="30S ribosomal protein S14 type Z"/>
    <property type="match status" value="1"/>
</dbReference>
<dbReference type="Gene3D" id="4.10.830.10">
    <property type="entry name" value="30s Ribosomal Protein S14, Chain N"/>
    <property type="match status" value="1"/>
</dbReference>
<dbReference type="HAMAP" id="MF_01364_B">
    <property type="entry name" value="Ribosomal_uS14_2_B"/>
    <property type="match status" value="1"/>
</dbReference>
<dbReference type="InterPro" id="IPR001209">
    <property type="entry name" value="Ribosomal_uS14"/>
</dbReference>
<dbReference type="InterPro" id="IPR023053">
    <property type="entry name" value="Ribosomal_uS14_bact"/>
</dbReference>
<dbReference type="InterPro" id="IPR018271">
    <property type="entry name" value="Ribosomal_uS14_CS"/>
</dbReference>
<dbReference type="InterPro" id="IPR043140">
    <property type="entry name" value="Ribosomal_uS14_sf"/>
</dbReference>
<dbReference type="NCBIfam" id="NF005974">
    <property type="entry name" value="PRK08061.1"/>
    <property type="match status" value="1"/>
</dbReference>
<dbReference type="PANTHER" id="PTHR19836">
    <property type="entry name" value="30S RIBOSOMAL PROTEIN S14"/>
    <property type="match status" value="1"/>
</dbReference>
<dbReference type="PANTHER" id="PTHR19836:SF19">
    <property type="entry name" value="SMALL RIBOSOMAL SUBUNIT PROTEIN US14M"/>
    <property type="match status" value="1"/>
</dbReference>
<dbReference type="Pfam" id="PF00253">
    <property type="entry name" value="Ribosomal_S14"/>
    <property type="match status" value="1"/>
</dbReference>
<dbReference type="SUPFAM" id="SSF57716">
    <property type="entry name" value="Glucocorticoid receptor-like (DNA-binding domain)"/>
    <property type="match status" value="1"/>
</dbReference>
<dbReference type="PROSITE" id="PS00527">
    <property type="entry name" value="RIBOSOMAL_S14"/>
    <property type="match status" value="1"/>
</dbReference>
<organism>
    <name type="scientific">Dictyoglomus thermophilum (strain ATCC 35947 / DSM 3960 / H-6-12)</name>
    <dbReference type="NCBI Taxonomy" id="309799"/>
    <lineage>
        <taxon>Bacteria</taxon>
        <taxon>Pseudomonadati</taxon>
        <taxon>Dictyoglomota</taxon>
        <taxon>Dictyoglomia</taxon>
        <taxon>Dictyoglomales</taxon>
        <taxon>Dictyoglomaceae</taxon>
        <taxon>Dictyoglomus</taxon>
    </lineage>
</organism>
<name>RS14Z_DICT6</name>